<comment type="function">
    <text evidence="1">Prevents the cell division inhibition by proteins MinC and MinD at internal division sites while permitting inhibition at polar sites. This ensures cell division at the proper site by restricting the formation of a division septum at the midpoint of the long axis of the cell.</text>
</comment>
<comment type="similarity">
    <text evidence="1">Belongs to the MinE family.</text>
</comment>
<sequence>MSVLTFLKPRGSSSVARERLQLILAHERAERSETGRPDLIITLREEILNVIAKHVTVERDKVQIKLERGEGVSTLGVDIEFPVDAISKAKPKAKRAIA</sequence>
<keyword id="KW-0131">Cell cycle</keyword>
<keyword id="KW-0132">Cell division</keyword>
<feature type="chain" id="PRO_1000114230" description="Cell division topological specificity factor">
    <location>
        <begin position="1"/>
        <end position="98"/>
    </location>
</feature>
<reference key="1">
    <citation type="submission" date="2008-04" db="EMBL/GenBank/DDBJ databases">
        <title>Complete sequence of chromosome of Methylobacterium populi BJ001.</title>
        <authorList>
            <consortium name="US DOE Joint Genome Institute"/>
            <person name="Copeland A."/>
            <person name="Lucas S."/>
            <person name="Lapidus A."/>
            <person name="Glavina del Rio T."/>
            <person name="Dalin E."/>
            <person name="Tice H."/>
            <person name="Bruce D."/>
            <person name="Goodwin L."/>
            <person name="Pitluck S."/>
            <person name="Chertkov O."/>
            <person name="Brettin T."/>
            <person name="Detter J.C."/>
            <person name="Han C."/>
            <person name="Kuske C.R."/>
            <person name="Schmutz J."/>
            <person name="Larimer F."/>
            <person name="Land M."/>
            <person name="Hauser L."/>
            <person name="Kyrpides N."/>
            <person name="Mikhailova N."/>
            <person name="Marx C."/>
            <person name="Richardson P."/>
        </authorList>
    </citation>
    <scope>NUCLEOTIDE SEQUENCE [LARGE SCALE GENOMIC DNA]</scope>
    <source>
        <strain>ATCC BAA-705 / NCIMB 13946 / BJ001</strain>
    </source>
</reference>
<accession>B1ZCM6</accession>
<gene>
    <name evidence="1" type="primary">minE</name>
    <name type="ordered locus">Mpop_1219</name>
</gene>
<protein>
    <recommendedName>
        <fullName evidence="1">Cell division topological specificity factor</fullName>
    </recommendedName>
</protein>
<evidence type="ECO:0000255" key="1">
    <source>
        <dbReference type="HAMAP-Rule" id="MF_00262"/>
    </source>
</evidence>
<name>MINE_METPB</name>
<organism>
    <name type="scientific">Methylorubrum populi (strain ATCC BAA-705 / NCIMB 13946 / BJ001)</name>
    <name type="common">Methylobacterium populi</name>
    <dbReference type="NCBI Taxonomy" id="441620"/>
    <lineage>
        <taxon>Bacteria</taxon>
        <taxon>Pseudomonadati</taxon>
        <taxon>Pseudomonadota</taxon>
        <taxon>Alphaproteobacteria</taxon>
        <taxon>Hyphomicrobiales</taxon>
        <taxon>Methylobacteriaceae</taxon>
        <taxon>Methylorubrum</taxon>
    </lineage>
</organism>
<dbReference type="EMBL" id="CP001029">
    <property type="protein sequence ID" value="ACB79391.1"/>
    <property type="molecule type" value="Genomic_DNA"/>
</dbReference>
<dbReference type="RefSeq" id="WP_012453140.1">
    <property type="nucleotide sequence ID" value="NC_010725.1"/>
</dbReference>
<dbReference type="SMR" id="B1ZCM6"/>
<dbReference type="STRING" id="441620.Mpop_1219"/>
<dbReference type="KEGG" id="mpo:Mpop_1219"/>
<dbReference type="eggNOG" id="COG0851">
    <property type="taxonomic scope" value="Bacteria"/>
</dbReference>
<dbReference type="HOGENOM" id="CLU_137929_2_1_5"/>
<dbReference type="OrthoDB" id="9802655at2"/>
<dbReference type="Proteomes" id="UP000007136">
    <property type="component" value="Chromosome"/>
</dbReference>
<dbReference type="GO" id="GO:0051301">
    <property type="term" value="P:cell division"/>
    <property type="evidence" value="ECO:0007669"/>
    <property type="project" value="UniProtKB-KW"/>
</dbReference>
<dbReference type="GO" id="GO:0032955">
    <property type="term" value="P:regulation of division septum assembly"/>
    <property type="evidence" value="ECO:0007669"/>
    <property type="project" value="InterPro"/>
</dbReference>
<dbReference type="Gene3D" id="3.30.1070.10">
    <property type="entry name" value="Cell division topological specificity factor MinE"/>
    <property type="match status" value="1"/>
</dbReference>
<dbReference type="HAMAP" id="MF_00262">
    <property type="entry name" value="MinE"/>
    <property type="match status" value="1"/>
</dbReference>
<dbReference type="InterPro" id="IPR005527">
    <property type="entry name" value="MinE"/>
</dbReference>
<dbReference type="InterPro" id="IPR036707">
    <property type="entry name" value="MinE_sf"/>
</dbReference>
<dbReference type="NCBIfam" id="TIGR01215">
    <property type="entry name" value="minE"/>
    <property type="match status" value="1"/>
</dbReference>
<dbReference type="NCBIfam" id="NF001422">
    <property type="entry name" value="PRK00296.1"/>
    <property type="match status" value="1"/>
</dbReference>
<dbReference type="Pfam" id="PF03776">
    <property type="entry name" value="MinE"/>
    <property type="match status" value="1"/>
</dbReference>
<dbReference type="SUPFAM" id="SSF55229">
    <property type="entry name" value="Cell division protein MinE topological specificity domain"/>
    <property type="match status" value="1"/>
</dbReference>
<proteinExistence type="inferred from homology"/>